<evidence type="ECO:0000255" key="1">
    <source>
        <dbReference type="HAMAP-Rule" id="MF_00754"/>
    </source>
</evidence>
<evidence type="ECO:0000256" key="2">
    <source>
        <dbReference type="SAM" id="MobiDB-lite"/>
    </source>
</evidence>
<comment type="function">
    <text evidence="1">Part of ribonuclease P, a protein complex that generates mature tRNA molecules by cleaving their 5'-ends.</text>
</comment>
<comment type="catalytic activity">
    <reaction evidence="1">
        <text>Endonucleolytic cleavage of RNA, removing 5'-extranucleotides from tRNA precursor.</text>
        <dbReference type="EC" id="3.1.26.5"/>
    </reaction>
</comment>
<comment type="subunit">
    <text evidence="1">Consists of a catalytic RNA component and at least 4-5 protein subunits.</text>
</comment>
<comment type="subcellular location">
    <subcellularLocation>
        <location evidence="1">Cytoplasm</location>
    </subcellularLocation>
</comment>
<comment type="similarity">
    <text evidence="1">Belongs to the eukaryotic/archaeal RNase P protein component 1 family.</text>
</comment>
<protein>
    <recommendedName>
        <fullName evidence="1">Ribonuclease P protein component 1</fullName>
        <shortName evidence="1">RNase P component 1</shortName>
        <ecNumber evidence="1">3.1.26.5</ecNumber>
    </recommendedName>
    <alternativeName>
        <fullName evidence="1">Rpp29</fullName>
    </alternativeName>
</protein>
<organism>
    <name type="scientific">Halobacterium salinarum (strain ATCC 700922 / JCM 11081 / NRC-1)</name>
    <name type="common">Halobacterium halobium</name>
    <dbReference type="NCBI Taxonomy" id="64091"/>
    <lineage>
        <taxon>Archaea</taxon>
        <taxon>Methanobacteriati</taxon>
        <taxon>Methanobacteriota</taxon>
        <taxon>Stenosarchaea group</taxon>
        <taxon>Halobacteria</taxon>
        <taxon>Halobacteriales</taxon>
        <taxon>Halobacteriaceae</taxon>
        <taxon>Halobacterium</taxon>
        <taxon>Halobacterium salinarum NRC-34001</taxon>
    </lineage>
</organism>
<dbReference type="EC" id="3.1.26.5" evidence="1"/>
<dbReference type="EMBL" id="AB006961">
    <property type="protein sequence ID" value="BAA22278.1"/>
    <property type="molecule type" value="Genomic_DNA"/>
</dbReference>
<dbReference type="EMBL" id="AE004437">
    <property type="protein sequence ID" value="AAG19944.1"/>
    <property type="molecule type" value="Genomic_DNA"/>
</dbReference>
<dbReference type="PIR" id="D84322">
    <property type="entry name" value="D84322"/>
</dbReference>
<dbReference type="PIR" id="T43824">
    <property type="entry name" value="T43824"/>
</dbReference>
<dbReference type="RefSeq" id="WP_010903242.1">
    <property type="nucleotide sequence ID" value="NC_002607.1"/>
</dbReference>
<dbReference type="SMR" id="O24785"/>
<dbReference type="FunCoup" id="O24785">
    <property type="interactions" value="1"/>
</dbReference>
<dbReference type="STRING" id="64091.VNG_1699C"/>
<dbReference type="PaxDb" id="64091-VNG_1699C"/>
<dbReference type="KEGG" id="hal:VNG_1699C"/>
<dbReference type="PATRIC" id="fig|64091.14.peg.1296"/>
<dbReference type="HOGENOM" id="CLU_107020_0_0_2"/>
<dbReference type="InParanoid" id="O24785"/>
<dbReference type="OrthoDB" id="39019at2157"/>
<dbReference type="PhylomeDB" id="O24785"/>
<dbReference type="Proteomes" id="UP000000554">
    <property type="component" value="Chromosome"/>
</dbReference>
<dbReference type="GO" id="GO:0005737">
    <property type="term" value="C:cytoplasm"/>
    <property type="evidence" value="ECO:0007669"/>
    <property type="project" value="UniProtKB-SubCell"/>
</dbReference>
<dbReference type="GO" id="GO:0030677">
    <property type="term" value="C:ribonuclease P complex"/>
    <property type="evidence" value="ECO:0007669"/>
    <property type="project" value="UniProtKB-UniRule"/>
</dbReference>
<dbReference type="GO" id="GO:0004526">
    <property type="term" value="F:ribonuclease P activity"/>
    <property type="evidence" value="ECO:0007669"/>
    <property type="project" value="UniProtKB-UniRule"/>
</dbReference>
<dbReference type="GO" id="GO:0003723">
    <property type="term" value="F:RNA binding"/>
    <property type="evidence" value="ECO:0007669"/>
    <property type="project" value="InterPro"/>
</dbReference>
<dbReference type="GO" id="GO:0001682">
    <property type="term" value="P:tRNA 5'-leader removal"/>
    <property type="evidence" value="ECO:0007669"/>
    <property type="project" value="UniProtKB-UniRule"/>
</dbReference>
<dbReference type="Gene3D" id="2.30.30.210">
    <property type="entry name" value="Ribonuclease P/MRP, subunit p29"/>
    <property type="match status" value="1"/>
</dbReference>
<dbReference type="HAMAP" id="MF_00754">
    <property type="entry name" value="RNase_P_1"/>
    <property type="match status" value="1"/>
</dbReference>
<dbReference type="InterPro" id="IPR036980">
    <property type="entry name" value="RNase_P/MRP_Rpp29_sf"/>
</dbReference>
<dbReference type="InterPro" id="IPR023538">
    <property type="entry name" value="RNP1"/>
</dbReference>
<dbReference type="InterPro" id="IPR023534">
    <property type="entry name" value="Rof/RNase_P-like"/>
</dbReference>
<dbReference type="InterPro" id="IPR002730">
    <property type="entry name" value="Rpp29/RNP1"/>
</dbReference>
<dbReference type="Pfam" id="PF01868">
    <property type="entry name" value="RNase_P-MRP_p29"/>
    <property type="match status" value="1"/>
</dbReference>
<dbReference type="SMART" id="SM00538">
    <property type="entry name" value="POP4"/>
    <property type="match status" value="1"/>
</dbReference>
<dbReference type="SUPFAM" id="SSF101744">
    <property type="entry name" value="Rof/RNase P subunit-like"/>
    <property type="match status" value="1"/>
</dbReference>
<feature type="chain" id="PRO_0000128427" description="Ribonuclease P protein component 1">
    <location>
        <begin position="1"/>
        <end position="123"/>
    </location>
</feature>
<feature type="region of interest" description="Disordered" evidence="2">
    <location>
        <begin position="73"/>
        <end position="93"/>
    </location>
</feature>
<reference key="1">
    <citation type="journal article" date="1996" name="Biochem. Mol. Biol. Int.">
        <title>Organization and nucleotide sequences of ten ribosomal protein genes from the region equivalent to the S10 operon in the archaebacterium, Halobacterium halobium.</title>
        <authorList>
            <person name="Miyokawa T."/>
            <person name="Urayama T."/>
            <person name="Shimooka K."/>
            <person name="Itoh T."/>
        </authorList>
    </citation>
    <scope>NUCLEOTIDE SEQUENCE [GENOMIC DNA]</scope>
</reference>
<reference key="2">
    <citation type="journal article" date="2000" name="Proc. Natl. Acad. Sci. U.S.A.">
        <title>Genome sequence of Halobacterium species NRC-1.</title>
        <authorList>
            <person name="Ng W.V."/>
            <person name="Kennedy S.P."/>
            <person name="Mahairas G.G."/>
            <person name="Berquist B."/>
            <person name="Pan M."/>
            <person name="Shukla H.D."/>
            <person name="Lasky S.R."/>
            <person name="Baliga N.S."/>
            <person name="Thorsson V."/>
            <person name="Sbrogna J."/>
            <person name="Swartzell S."/>
            <person name="Weir D."/>
            <person name="Hall J."/>
            <person name="Dahl T.A."/>
            <person name="Welti R."/>
            <person name="Goo Y.A."/>
            <person name="Leithauser B."/>
            <person name="Keller K."/>
            <person name="Cruz R."/>
            <person name="Danson M.J."/>
            <person name="Hough D.W."/>
            <person name="Maddocks D.G."/>
            <person name="Jablonski P.E."/>
            <person name="Krebs M.P."/>
            <person name="Angevine C.M."/>
            <person name="Dale H."/>
            <person name="Isenbarger T.A."/>
            <person name="Peck R.F."/>
            <person name="Pohlschroder M."/>
            <person name="Spudich J.L."/>
            <person name="Jung K.-H."/>
            <person name="Alam M."/>
            <person name="Freitas T."/>
            <person name="Hou S."/>
            <person name="Daniels C.J."/>
            <person name="Dennis P.P."/>
            <person name="Omer A.D."/>
            <person name="Ebhardt H."/>
            <person name="Lowe T.M."/>
            <person name="Liang P."/>
            <person name="Riley M."/>
            <person name="Hood L."/>
            <person name="DasSarma S."/>
        </authorList>
    </citation>
    <scope>NUCLEOTIDE SEQUENCE [LARGE SCALE GENOMIC DNA]</scope>
    <source>
        <strain>ATCC 700922 / JCM 11081 / NRC-1</strain>
    </source>
</reference>
<reference key="3">
    <citation type="journal article" date="1989" name="Can. J. Microbiol.">
        <title>Ribosomal protein gene cluster of Halobacterium halobium: nucleotide sequence of the genes coding for S3 and L29 equivalent ribosomal proteins.</title>
        <authorList>
            <person name="Spiridonova V.A."/>
            <person name="Akhmanova A.S."/>
            <person name="Kagramanova V.K."/>
            <person name="Koepke A.K.E."/>
            <person name="Mankin A.S."/>
        </authorList>
    </citation>
    <scope>NUCLEOTIDE SEQUENCE [GENOMIC DNA] OF 8-84</scope>
</reference>
<gene>
    <name evidence="1" type="primary">rnp1</name>
    <name type="ordered locus">VNG_1699C</name>
</gene>
<name>RNP1_HALSA</name>
<keyword id="KW-0963">Cytoplasm</keyword>
<keyword id="KW-0255">Endonuclease</keyword>
<keyword id="KW-0378">Hydrolase</keyword>
<keyword id="KW-0540">Nuclease</keyword>
<keyword id="KW-1185">Reference proteome</keyword>
<keyword id="KW-0819">tRNA processing</keyword>
<accession>O24785</accession>
<accession>Q9HPC6</accession>
<sequence>MTTITPESLPRHELLGLHARVAADTDQSRVGIAGRVVDETMQTVVLRTASGVAQVPKKGATFEFRLTDEAAAPDNGVGTAFKPAGGETRQTTGESVAYVTVDGGRLLSRPERRSENGVDSKWR</sequence>
<proteinExistence type="inferred from homology"/>